<dbReference type="EMBL" id="AM689309">
    <property type="protein sequence ID" value="CAM84585.2"/>
    <property type="molecule type" value="Genomic_RNA"/>
</dbReference>
<dbReference type="RefSeq" id="YP_003126910.1">
    <property type="nucleotide sequence ID" value="NC_013135.1"/>
</dbReference>
<dbReference type="GeneID" id="8363511"/>
<dbReference type="KEGG" id="vg:8363511"/>
<dbReference type="OrthoDB" id="29745at10239"/>
<dbReference type="Proteomes" id="UP000029768">
    <property type="component" value="Genome"/>
</dbReference>
<keyword id="KW-1185">Reference proteome</keyword>
<keyword id="KW-0732">Signal</keyword>
<protein>
    <recommendedName>
        <fullName>Protein PP3</fullName>
    </recommendedName>
</protein>
<organismHost>
    <name type="scientific">Drosophila melanogaster</name>
    <name type="common">Fruit fly</name>
    <dbReference type="NCBI Taxonomy" id="7227"/>
</organismHost>
<sequence length="298" mass="33710">MCRRTSVLPLVLSLFHLYYYGNVLSVSIPLSINITDRILPVQLNTTILMEGAEELNITQQLNVKHFQEGQLTREENFVCSHMTTTDLATDFFQLSKLAGAYDAAGSQDQRLHSPSLTSTLAPVVPETTPATLTPDGVTLNIRTSVTDINPLTRFTKAVRDLKEDITPGYDLTNGRKFGREFLRALEENGVRGRHKRDSTTDVLQMTLDVTESREKYVEIRDQCASVLGALIKSMVPSVSEHCLYHYHIKNIINCFTSHYIRLHNEPDFPLVMALYSEYLSLTVKIHYMDEILVSTLRA</sequence>
<organism>
    <name type="scientific">Drosophila melanogaster sigma virus (isolate Drosophila/USA/AP30/2005)</name>
    <name type="common">DMelSV</name>
    <dbReference type="NCBI Taxonomy" id="666363"/>
    <lineage>
        <taxon>Viruses</taxon>
        <taxon>Riboviria</taxon>
        <taxon>Orthornavirae</taxon>
        <taxon>Negarnaviricota</taxon>
        <taxon>Haploviricotina</taxon>
        <taxon>Monjiviricetes</taxon>
        <taxon>Mononegavirales</taxon>
        <taxon>Rhabdoviridae</taxon>
        <taxon>Alpharhabdovirinae</taxon>
        <taxon>Sigmavirus</taxon>
        <taxon>Sigmavirus melanogaster</taxon>
    </lineage>
</organism>
<reference key="1">
    <citation type="journal article" date="2007" name="Mol. Ecol.">
        <title>The recent spread of a vertically transmitted virus through populations of Drosophila melanogaster.</title>
        <authorList>
            <person name="Carpenter J.A."/>
            <person name="Obbard D.J."/>
            <person name="Maside X."/>
            <person name="Jiggins F.M."/>
        </authorList>
    </citation>
    <scope>NUCLEOTIDE SEQUENCE [GENOMIC RNA]</scope>
    <source>
        <strain>AP30</strain>
    </source>
</reference>
<reference key="2">
    <citation type="journal article" date="1995" name="Virology">
        <title>Gene 2 of the sigma rhabdovirus genome encodes the P protein, and gene 3 encodes a protein related to the reverse transcriptase of retroelements.</title>
        <authorList>
            <person name="Landes-Devauchelle C."/>
            <person name="Bras F."/>
            <person name="Dezelee S."/>
            <person name="Teninges D."/>
        </authorList>
    </citation>
    <scope>CHARACTERIZATION</scope>
</reference>
<name>PP3_DMSVA</name>
<gene>
    <name type="primary">X</name>
    <name type="ORF">3</name>
</gene>
<proteinExistence type="evidence at protein level"/>
<accession>A7WNB0</accession>
<comment type="function">
    <text evidence="2">Does not belong to rhabdoviridae replication core genes, and is specific to sigma virus: PP3 is presumably involved in host-virus interactions.</text>
</comment>
<comment type="similarity">
    <text evidence="2">Belongs to the sigma rhabdovirus PP3 family.</text>
</comment>
<comment type="caution">
    <text evidence="2">Some distand similarity have been found with reverse transcriptases, but it is unlikely that this protein has this function.</text>
</comment>
<evidence type="ECO:0000255" key="1"/>
<evidence type="ECO:0000305" key="2"/>
<feature type="signal peptide" evidence="1">
    <location>
        <begin position="1"/>
        <end position="25"/>
    </location>
</feature>
<feature type="chain" id="PRO_0000432055" description="Protein PP3">
    <location>
        <begin position="26"/>
        <end position="298"/>
    </location>
</feature>